<keyword id="KW-1185">Reference proteome</keyword>
<keyword id="KW-0808">Transferase</keyword>
<organism>
    <name type="scientific">Fusarium oxysporum f. sp. lycopersici (strain 4287 / CBS 123668 / FGSC 9935 / NRRL 34936)</name>
    <name type="common">Fusarium vascular wilt of tomato</name>
    <dbReference type="NCBI Taxonomy" id="426428"/>
    <lineage>
        <taxon>Eukaryota</taxon>
        <taxon>Fungi</taxon>
        <taxon>Dikarya</taxon>
        <taxon>Ascomycota</taxon>
        <taxon>Pezizomycotina</taxon>
        <taxon>Sordariomycetes</taxon>
        <taxon>Hypocreomycetidae</taxon>
        <taxon>Hypocreales</taxon>
        <taxon>Nectriaceae</taxon>
        <taxon>Fusarium</taxon>
        <taxon>Fusarium oxysporum species complex</taxon>
    </lineage>
</organism>
<sequence>MSWGKLSPKANNVMIICHALSGSADVSDWWGPLLGPGKAFDTDKFFVVCMNSLGSPYGTASPVTAKNGDYSQGWYGADFPSTTIRDDVRLHKLVLDKLGVRKVAAVIGGSMGGMHVLEWAFFGKDYVRCIVPAATSSHQSAWAIGWGEAQRHAIRSDVKYKNGRYGFDDPPILGLEAARMTALLTYRSRDSLERRFGRDTGNKKKTQQQDSKTIPNNGTPIHSQGGADETPVAFDRADSNFAAQSYLRYQAKKFSDRFDSNCYIALTNKLDTHDLARGRTRTIAEALSLIQQPTLVLGIRSDGLYTLAEQEQIARAVPNAKLREIVSDDGHDAFLIEWSQLNWLLIGFLHENLPDIMQRAAL</sequence>
<gene>
    <name evidence="12" type="primary">FUB5</name>
    <name type="ORF">FOXG_15243</name>
</gene>
<accession>A0A0D2YG05</accession>
<reference key="1">
    <citation type="journal article" date="2010" name="Nature">
        <title>Comparative genomics reveals mobile pathogenicity chromosomes in Fusarium.</title>
        <authorList>
            <person name="Ma L.-J."/>
            <person name="van der Does H.C."/>
            <person name="Borkovich K.A."/>
            <person name="Coleman J.J."/>
            <person name="Daboussi M.-J."/>
            <person name="Di Pietro A."/>
            <person name="Dufresne M."/>
            <person name="Freitag M."/>
            <person name="Grabherr M."/>
            <person name="Henrissat B."/>
            <person name="Houterman P.M."/>
            <person name="Kang S."/>
            <person name="Shim W.-B."/>
            <person name="Woloshuk C."/>
            <person name="Xie X."/>
            <person name="Xu J.-R."/>
            <person name="Antoniw J."/>
            <person name="Baker S.E."/>
            <person name="Bluhm B.H."/>
            <person name="Breakspear A."/>
            <person name="Brown D.W."/>
            <person name="Butchko R.A.E."/>
            <person name="Chapman S."/>
            <person name="Coulson R."/>
            <person name="Coutinho P.M."/>
            <person name="Danchin E.G.J."/>
            <person name="Diener A."/>
            <person name="Gale L.R."/>
            <person name="Gardiner D.M."/>
            <person name="Goff S."/>
            <person name="Hammond-Kosack K.E."/>
            <person name="Hilburn K."/>
            <person name="Hua-Van A."/>
            <person name="Jonkers W."/>
            <person name="Kazan K."/>
            <person name="Kodira C.D."/>
            <person name="Koehrsen M."/>
            <person name="Kumar L."/>
            <person name="Lee Y.-H."/>
            <person name="Li L."/>
            <person name="Manners J.M."/>
            <person name="Miranda-Saavedra D."/>
            <person name="Mukherjee M."/>
            <person name="Park G."/>
            <person name="Park J."/>
            <person name="Park S.-Y."/>
            <person name="Proctor R.H."/>
            <person name="Regev A."/>
            <person name="Ruiz-Roldan M.C."/>
            <person name="Sain D."/>
            <person name="Sakthikumar S."/>
            <person name="Sykes S."/>
            <person name="Schwartz D.C."/>
            <person name="Turgeon B.G."/>
            <person name="Wapinski I."/>
            <person name="Yoder O."/>
            <person name="Young S."/>
            <person name="Zeng Q."/>
            <person name="Zhou S."/>
            <person name="Galagan J."/>
            <person name="Cuomo C.A."/>
            <person name="Kistler H.C."/>
            <person name="Rep M."/>
        </authorList>
    </citation>
    <scope>NUCLEOTIDE SEQUENCE [LARGE SCALE GENOMIC DNA]</scope>
    <source>
        <strain>4287 / CBS 123668 / FGSC 9935 / NRRL 34936</strain>
    </source>
</reference>
<reference key="2">
    <citation type="submission" date="2015-03" db="UniProtKB">
        <authorList>
            <consortium name="EnsemblFungi"/>
        </authorList>
    </citation>
    <scope>IDENTIFICATION</scope>
    <source>
        <strain>4287 / CBS 123668 / FGSC 9935 / NRRL 34936</strain>
    </source>
</reference>
<reference key="3">
    <citation type="journal article" date="2006" name="Planta">
        <title>Fusaric acid induces apoptosis in saffron root-tip cells: roles of caspase-like activity, cytochrome c, and H2O2.</title>
        <authorList>
            <person name="Samadi L."/>
            <person name="Shahsavan Behboodi B."/>
        </authorList>
    </citation>
    <scope>BIOTECHNOLOGY</scope>
</reference>
<reference key="4">
    <citation type="journal article" date="2008" name="J. Appl. Microbiol.">
        <title>Bikaverin and fusaric acid from Fusarium oxysporum show antioomycete activity against Phytophthora infestans.</title>
        <authorList>
            <person name="Son S.W."/>
            <person name="Kim H.Y."/>
            <person name="Choi G.J."/>
            <person name="Lim H.K."/>
            <person name="Jang K.S."/>
            <person name="Lee S.O."/>
            <person name="Lee S."/>
            <person name="Sung N.D."/>
            <person name="Kim J.C."/>
        </authorList>
    </citation>
    <scope>BIOTECHNOLOGY</scope>
</reference>
<reference key="5">
    <citation type="journal article" date="2011" name="Arch. Pharm. Res.">
        <title>Antimycobacterial activity of fusaric acid from a mangrove endophyte and its metal complexes.</title>
        <authorList>
            <person name="Pan J.H."/>
            <person name="Chen Y."/>
            <person name="Huang Y.H."/>
            <person name="Tao Y.W."/>
            <person name="Wang J."/>
            <person name="Li Y."/>
            <person name="Peng Y."/>
            <person name="Dong T."/>
            <person name="Lai X.M."/>
            <person name="Lin Y.C."/>
        </authorList>
    </citation>
    <scope>BIOTECHNOLOGY</scope>
</reference>
<reference key="6">
    <citation type="journal article" date="2011" name="Toxicon">
        <title>Phytotoxicity of fusaric acid and analogs to cotton.</title>
        <authorList>
            <person name="Stipanovic R.D."/>
            <person name="Puckhaber L.S."/>
            <person name="Liu J."/>
            <person name="Bell A.A."/>
        </authorList>
    </citation>
    <scope>BIOTECHNOLOGY</scope>
</reference>
<reference key="7">
    <citation type="journal article" date="2012" name="Planta Med.">
        <title>In vitro acanthamoebicidal activity of fusaric acid and dehydrofusaric acid from an endophytic fungus Fusarium sp. Tlau3.</title>
        <authorList>
            <person name="Boonman N."/>
            <person name="Prachya S."/>
            <person name="Boonmee A."/>
            <person name="Kittakoop P."/>
            <person name="Wiyakrutta S."/>
            <person name="Sriubolmas N."/>
            <person name="Warit S."/>
            <person name="Dharmkrong-At Chusattayanond A."/>
        </authorList>
    </citation>
    <scope>BIOTECHNOLOGY</scope>
</reference>
<reference key="8">
    <citation type="journal article" date="2013" name="Planta">
        <title>Fusaric acid induction of programmed cell death modulated through nitric oxide signalling in tobacco suspension cells.</title>
        <authorList>
            <person name="Jiao J."/>
            <person name="Zhou B."/>
            <person name="Zhu X."/>
            <person name="Gao Z."/>
            <person name="Liang Y."/>
        </authorList>
    </citation>
    <scope>BIOTECHNOLOGY</scope>
</reference>
<reference key="9">
    <citation type="journal article" date="2013" name="PLoS ONE">
        <title>Contamination of bananas with beauvericin and fusaric acid produced by Fusarium oxysporum f. sp. cubense.</title>
        <authorList>
            <person name="Li C."/>
            <person name="Zuo C."/>
            <person name="Deng G."/>
            <person name="Kuang R."/>
            <person name="Yang Q."/>
            <person name="Hu C."/>
            <person name="Sheng O."/>
            <person name="Zhang S."/>
            <person name="Ma L."/>
            <person name="Wei Y."/>
            <person name="Yang J."/>
            <person name="Liu S."/>
            <person name="Biswas M.K."/>
            <person name="Viljoen A."/>
            <person name="Yi G."/>
        </authorList>
    </citation>
    <scope>BIOTECHNOLOGY</scope>
</reference>
<reference key="10">
    <citation type="journal article" date="2015" name="Mol. Plant Microbe Interact.">
        <title>Identification of a 12-gene fusaric acid biosynthetic gene cluster in Fusarium species through comparative and functional genomics.</title>
        <authorList>
            <person name="Brown D.W."/>
            <person name="Lee S.H."/>
            <person name="Kim L.H."/>
            <person name="Ryu J.G."/>
            <person name="Lee S."/>
            <person name="Seo Y."/>
            <person name="Kim Y.H."/>
            <person name="Busman M."/>
            <person name="Yun S.H."/>
            <person name="Proctor R.H."/>
            <person name="Lee T."/>
        </authorList>
    </citation>
    <scope>FUNCTION</scope>
    <scope>CATALYTIC ACTIVITY</scope>
</reference>
<evidence type="ECO:0000250" key="1">
    <source>
        <dbReference type="UniProtKB" id="S0DUX2"/>
    </source>
</evidence>
<evidence type="ECO:0000255" key="2"/>
<evidence type="ECO:0000256" key="3">
    <source>
        <dbReference type="SAM" id="MobiDB-lite"/>
    </source>
</evidence>
<evidence type="ECO:0000269" key="4">
    <source>
    </source>
</evidence>
<evidence type="ECO:0000269" key="5">
    <source>
    </source>
</evidence>
<evidence type="ECO:0000269" key="6">
    <source>
    </source>
</evidence>
<evidence type="ECO:0000269" key="7">
    <source>
    </source>
</evidence>
<evidence type="ECO:0000269" key="8">
    <source>
    </source>
</evidence>
<evidence type="ECO:0000269" key="9">
    <source>
    </source>
</evidence>
<evidence type="ECO:0000269" key="10">
    <source>
    </source>
</evidence>
<evidence type="ECO:0000269" key="11">
    <source>
    </source>
</evidence>
<evidence type="ECO:0000303" key="12">
    <source>
    </source>
</evidence>
<evidence type="ECO:0000305" key="13"/>
<evidence type="ECO:0000305" key="14">
    <source>
    </source>
</evidence>
<dbReference type="EC" id="2.3.1.31" evidence="14"/>
<dbReference type="EMBL" id="DS231721">
    <property type="protein sequence ID" value="KNB17117.1"/>
    <property type="molecule type" value="Genomic_DNA"/>
</dbReference>
<dbReference type="EMBL" id="DS231721">
    <property type="protein sequence ID" value="KNB17118.1"/>
    <property type="molecule type" value="Genomic_DNA"/>
</dbReference>
<dbReference type="RefSeq" id="XP_018255162.1">
    <property type="nucleotide sequence ID" value="XM_018395328.1"/>
</dbReference>
<dbReference type="RefSeq" id="XP_018255163.1">
    <property type="nucleotide sequence ID" value="XM_018395329.1"/>
</dbReference>
<dbReference type="SMR" id="A0A0D2YG05"/>
<dbReference type="STRING" id="426428.A0A0D2YG05"/>
<dbReference type="ESTHER" id="gibf5-fub5">
    <property type="family name" value="Homoserine_transacetylase"/>
</dbReference>
<dbReference type="EnsemblFungi" id="FOXG_15243T0">
    <property type="protein sequence ID" value="FOXG_15243P0"/>
    <property type="gene ID" value="FOXG_15243"/>
</dbReference>
<dbReference type="GeneID" id="28956319"/>
<dbReference type="KEGG" id="fox:FOXG_15243"/>
<dbReference type="VEuPathDB" id="FungiDB:FOXG_15243"/>
<dbReference type="OMA" id="GWYGADF"/>
<dbReference type="OrthoDB" id="96426at110618"/>
<dbReference type="Proteomes" id="UP000009097">
    <property type="component" value="Unassembled WGS sequence"/>
</dbReference>
<dbReference type="GO" id="GO:0004414">
    <property type="term" value="F:homoserine O-acetyltransferase activity"/>
    <property type="evidence" value="ECO:0007669"/>
    <property type="project" value="UniProtKB-EC"/>
</dbReference>
<dbReference type="GO" id="GO:0009092">
    <property type="term" value="P:homoserine metabolic process"/>
    <property type="evidence" value="ECO:0007669"/>
    <property type="project" value="TreeGrafter"/>
</dbReference>
<dbReference type="GO" id="GO:0009086">
    <property type="term" value="P:methionine biosynthetic process"/>
    <property type="evidence" value="ECO:0007669"/>
    <property type="project" value="TreeGrafter"/>
</dbReference>
<dbReference type="Gene3D" id="3.40.50.1820">
    <property type="entry name" value="alpha/beta hydrolase"/>
    <property type="match status" value="1"/>
</dbReference>
<dbReference type="HAMAP" id="MF_00296">
    <property type="entry name" value="MetX_acyltransf"/>
    <property type="match status" value="1"/>
</dbReference>
<dbReference type="InterPro" id="IPR000073">
    <property type="entry name" value="AB_hydrolase_1"/>
</dbReference>
<dbReference type="InterPro" id="IPR029058">
    <property type="entry name" value="AB_hydrolase_fold"/>
</dbReference>
<dbReference type="InterPro" id="IPR008220">
    <property type="entry name" value="HAT_MetX-like"/>
</dbReference>
<dbReference type="NCBIfam" id="TIGR01392">
    <property type="entry name" value="homoserO_Ac_trn"/>
    <property type="match status" value="1"/>
</dbReference>
<dbReference type="PANTHER" id="PTHR32268">
    <property type="entry name" value="HOMOSERINE O-ACETYLTRANSFERASE"/>
    <property type="match status" value="1"/>
</dbReference>
<dbReference type="PANTHER" id="PTHR32268:SF11">
    <property type="entry name" value="HOMOSERINE O-ACETYLTRANSFERASE"/>
    <property type="match status" value="1"/>
</dbReference>
<dbReference type="Pfam" id="PF00561">
    <property type="entry name" value="Abhydrolase_1"/>
    <property type="match status" value="1"/>
</dbReference>
<dbReference type="PIRSF" id="PIRSF000443">
    <property type="entry name" value="Homoser_Ac_trans"/>
    <property type="match status" value="1"/>
</dbReference>
<dbReference type="SUPFAM" id="SSF53474">
    <property type="entry name" value="alpha/beta-Hydrolases"/>
    <property type="match status" value="1"/>
</dbReference>
<name>FUB5_FUSO4</name>
<protein>
    <recommendedName>
        <fullName evidence="12">Homoserine O-acetyltransferase FUB5</fullName>
        <ecNumber evidence="14">2.3.1.31</ecNumber>
    </recommendedName>
    <alternativeName>
        <fullName evidence="12">Fusaric acid biosynthesis protein 5</fullName>
    </alternativeName>
</protein>
<feature type="chain" id="PRO_0000437320" description="Homoserine O-acetyltransferase FUB5">
    <location>
        <begin position="1"/>
        <end position="362"/>
    </location>
</feature>
<feature type="domain" description="AB hydrolase-1" evidence="2">
    <location>
        <begin position="12"/>
        <end position="335"/>
    </location>
</feature>
<feature type="region of interest" description="Disordered" evidence="3">
    <location>
        <begin position="195"/>
        <end position="232"/>
    </location>
</feature>
<feature type="compositionally biased region" description="Polar residues" evidence="3">
    <location>
        <begin position="208"/>
        <end position="222"/>
    </location>
</feature>
<feature type="active site" description="Nucleophile" evidence="2">
    <location>
        <position position="110"/>
    </location>
</feature>
<feature type="active site" evidence="2">
    <location>
        <position position="302"/>
    </location>
</feature>
<feature type="active site" evidence="2">
    <location>
        <position position="331"/>
    </location>
</feature>
<proteinExistence type="evidence at protein level"/>
<comment type="function">
    <text evidence="1 11">Homoserine O-acetyltransferase; part of the gene cluster that mediates the biosynthesis of fusaric acid, a mycotoxin with low to moderate toxicity to animals and humans, but with high phytotoxic properties (PubMed:25372119). L-aspartate is suggested as fusaric acid amino acid precursor that is activated and further processed to O-acetyl-L-homoserine by cluster enzymes aspartate kinase FUB3 and homoserine O-acetyltransferase FUB5, as well as enzymes of the primary metabolism (By similarity). The polyketide synthase (PKS) FUB1 generates the triketide trans-2-hexenal which is presumptively released by the hydrolase FUB4 and linked to the NRPS-bound amino acid precursor by NAD(P)-dependent dehydrogenase FUB6 (By similarity). FUB1, FUB4, and the non-canonical NRPS Fub8 may form an enzyme complex (By similarity). Further processing of the NRPS-bound intermediate might be carried out by FUB6 and the O-acetylhomoserine FUB7, enabling a spontaneous electrocyclization to close the carbon backbone of fusaric acid (By similarity). Dihydrofusaric acid is likely to be released via reduction by the thioester reductase (TR) domain of FUB8 whereupon the final oxidation to fusaric acid may (also) be performed by the FMN-dependent dehydrogenase FUB9 (By similarity).</text>
</comment>
<comment type="catalytic activity">
    <reaction evidence="14">
        <text>L-homoserine + acetyl-CoA = O-acetyl-L-homoserine + CoA</text>
        <dbReference type="Rhea" id="RHEA:13701"/>
        <dbReference type="ChEBI" id="CHEBI:57287"/>
        <dbReference type="ChEBI" id="CHEBI:57288"/>
        <dbReference type="ChEBI" id="CHEBI:57476"/>
        <dbReference type="ChEBI" id="CHEBI:57716"/>
        <dbReference type="EC" id="2.3.1.31"/>
    </reaction>
</comment>
<comment type="pathway">
    <text evidence="11">Mycotoxin biosynthesis.</text>
</comment>
<comment type="biotechnology">
    <text evidence="4 5 6 7 8 9 10">Fusaric acid is phytotoxic to plants such as cotton and banana (PubMed:20955724, PubMed:23922960). It has been shown to induce programmed cell death in plants (PubMed:16868776, PubMed:23838885). In addition to a mild toxicity to animals, fusaric acid exhibits acanthamoebicidal, antioomycete, and antimycobacterial activities (PubMed:17927749, PubMed:21811925, PubMed:22864988).</text>
</comment>
<comment type="similarity">
    <text evidence="13">Belongs to the AB hydrolase superfamily. MetX family.</text>
</comment>